<dbReference type="EC" id="1.14.11.6" evidence="2"/>
<dbReference type="EMBL" id="FR796405">
    <property type="protein sequence ID" value="CAJ03108.1"/>
    <property type="molecule type" value="Genomic_DNA"/>
</dbReference>
<dbReference type="RefSeq" id="XP_001681321.1">
    <property type="nucleotide sequence ID" value="XM_001681269.1"/>
</dbReference>
<dbReference type="SMR" id="Q4QHM7"/>
<dbReference type="STRING" id="5664.Q4QHM7"/>
<dbReference type="EnsemblProtists" id="CAJ03108">
    <property type="protein sequence ID" value="CAJ03108"/>
    <property type="gene ID" value="LMJF_09_1480"/>
</dbReference>
<dbReference type="GeneID" id="5649588"/>
<dbReference type="KEGG" id="lma:LMJF_09_1480"/>
<dbReference type="VEuPathDB" id="TriTrypDB:LmjF.09.1480"/>
<dbReference type="VEuPathDB" id="TriTrypDB:LMJFC_090022200"/>
<dbReference type="VEuPathDB" id="TriTrypDB:LMJLV39_090022400"/>
<dbReference type="VEuPathDB" id="TriTrypDB:LMJSD75_090022100"/>
<dbReference type="eggNOG" id="ENOG502RTYX">
    <property type="taxonomic scope" value="Eukaryota"/>
</dbReference>
<dbReference type="InParanoid" id="Q4QHM7"/>
<dbReference type="OMA" id="LCEVGKQ"/>
<dbReference type="BRENDA" id="1.14.11.6">
    <property type="organism ID" value="2950"/>
</dbReference>
<dbReference type="Proteomes" id="UP000000542">
    <property type="component" value="Chromosome 9"/>
</dbReference>
<dbReference type="GO" id="GO:0005634">
    <property type="term" value="C:nucleus"/>
    <property type="evidence" value="ECO:0000266"/>
    <property type="project" value="GeneDB"/>
</dbReference>
<dbReference type="GO" id="GO:0003677">
    <property type="term" value="F:DNA binding"/>
    <property type="evidence" value="ECO:0007669"/>
    <property type="project" value="UniProtKB-KW"/>
</dbReference>
<dbReference type="GO" id="GO:0015616">
    <property type="term" value="F:DNA translocase activity"/>
    <property type="evidence" value="ECO:0000318"/>
    <property type="project" value="GO_Central"/>
</dbReference>
<dbReference type="GO" id="GO:0008198">
    <property type="term" value="F:ferrous iron binding"/>
    <property type="evidence" value="ECO:0000266"/>
    <property type="project" value="GeneDB"/>
</dbReference>
<dbReference type="GO" id="GO:0050341">
    <property type="term" value="F:thymine dioxygenase activity"/>
    <property type="evidence" value="ECO:0000266"/>
    <property type="project" value="GeneDB"/>
</dbReference>
<dbReference type="GO" id="GO:0070580">
    <property type="term" value="P:base J metabolic process"/>
    <property type="evidence" value="ECO:0000266"/>
    <property type="project" value="GeneDB"/>
</dbReference>
<dbReference type="GO" id="GO:0006281">
    <property type="term" value="P:DNA repair"/>
    <property type="evidence" value="ECO:0000318"/>
    <property type="project" value="GO_Central"/>
</dbReference>
<dbReference type="CDD" id="cd20332">
    <property type="entry name" value="JBP"/>
    <property type="match status" value="1"/>
</dbReference>
<dbReference type="FunFam" id="1.20.120.1440:FF:000001">
    <property type="entry name" value="Thymine dioxygenase JBP1"/>
    <property type="match status" value="1"/>
</dbReference>
<dbReference type="FunFam" id="3.60.130.30:FF:000002">
    <property type="entry name" value="Thymine dioxygenase JBP1"/>
    <property type="match status" value="1"/>
</dbReference>
<dbReference type="Gene3D" id="3.60.130.30">
    <property type="match status" value="1"/>
</dbReference>
<dbReference type="Gene3D" id="1.20.120.1440">
    <property type="entry name" value="JBP1, DNA-binding domain"/>
    <property type="match status" value="1"/>
</dbReference>
<dbReference type="InterPro" id="IPR024779">
    <property type="entry name" value="2OGFeDO_JBP1/TET_oxygenase_dom"/>
</dbReference>
<dbReference type="InterPro" id="IPR041241">
    <property type="entry name" value="DB_JBP1"/>
</dbReference>
<dbReference type="InterPro" id="IPR043111">
    <property type="entry name" value="DB_JBP1_sf"/>
</dbReference>
<dbReference type="Pfam" id="PF18526">
    <property type="entry name" value="DB_JBP1"/>
    <property type="match status" value="1"/>
</dbReference>
<dbReference type="Pfam" id="PF12851">
    <property type="entry name" value="Tet_JBP"/>
    <property type="match status" value="1"/>
</dbReference>
<organism>
    <name type="scientific">Leishmania major</name>
    <dbReference type="NCBI Taxonomy" id="5664"/>
    <lineage>
        <taxon>Eukaryota</taxon>
        <taxon>Discoba</taxon>
        <taxon>Euglenozoa</taxon>
        <taxon>Kinetoplastea</taxon>
        <taxon>Metakinetoplastina</taxon>
        <taxon>Trypanosomatida</taxon>
        <taxon>Trypanosomatidae</taxon>
        <taxon>Leishmaniinae</taxon>
        <taxon>Leishmania</taxon>
    </lineage>
</organism>
<sequence length="814" mass="91826">MEPDPKKIKLDIFNFPTARETRTPEEVAESYAEAVKSHPFYDNVHSVIDFYDSGTIKDGRGQIIGVVLREALPKYAVSMASELLASAAVRTSLRSMMFGGESPLSGIAGYFDYRGSPVELKSRKTSFTYEHEAAWPAVFPVVDYVSELYRHVAPERWKAQNDAIPDVVRIHGTPFSTLTINSRFRTASHTDVGDFDGGYSCIACLDGHFKGLALAFDDFGINVLMQPRDVMIFDSHHFHSNTEVELSFSGEDWKRLTCVFYYRAALGEPASYAEYQRRLEKSKQDNSFTPVVSNVRVKENGTNLNRPSPVYPICPSPFWVPMVAHCLQHCASEAQCVHDAMTADGSRLAEVMFGEPLSTSDGIPLRGEDKKLKANSDSASRPLSRLGGFSETNLMVSTAVEKKKYLNSEFLSHFISAQLLDMWKQARGKWLELVGREWTHMLALNPERKDFLWKNQSEMNSAFFDLCEVGKQVMLGLLGKEVALPKEEQAFWTMYAVHLNAACAEELHMPHVAMSLRKLNVKLKDFNFGGTRYFKDMPPEEQKRRMERKQRIEEARRHGMSSGAHEKRANWLTNDSFDYQTEDCVVDYAQHKWPPPALHAKEITKNVRTGELPTREGVVRVLVVLPDPQSKLECVDCKLEVPETVRCSCEWERLMSSLAVRRVLAAAQRNLQLPGSVTHGNIEIRFAFHSRLPTDMCDFVVLQHVLSCIPDDVLASAYIRRAAALCTGCVYVVETDVQCRQYYTLKCAARCDYDAVASLFFQQLHRVSYGTKAARVRTKGELESLIPTVCCARYKLQGSPLNTTVHVVSPAPSR</sequence>
<name>JBP1_LEIMA</name>
<accession>Q4QHM7</accession>
<proteinExistence type="inferred from homology"/>
<feature type="chain" id="PRO_0000377553" description="Thymine dioxygenase JBP1">
    <location>
        <begin position="1"/>
        <end position="814"/>
    </location>
</feature>
<feature type="region of interest" description="Thymine dioxygenase" evidence="2">
    <location>
        <begin position="62"/>
        <end position="264"/>
    </location>
</feature>
<feature type="region of interest" description="DNA-binding JBP1 domain" evidence="2">
    <location>
        <begin position="392"/>
        <end position="561"/>
    </location>
</feature>
<feature type="binding site" evidence="1">
    <location>
        <position position="189"/>
    </location>
    <ligand>
        <name>Fe cation</name>
        <dbReference type="ChEBI" id="CHEBI:24875"/>
        <note>catalytic</note>
    </ligand>
</feature>
<feature type="binding site" evidence="1">
    <location>
        <position position="191"/>
    </location>
    <ligand>
        <name>Fe cation</name>
        <dbReference type="ChEBI" id="CHEBI:24875"/>
        <note>catalytic</note>
    </ligand>
</feature>
<feature type="binding site" evidence="1">
    <location>
        <position position="239"/>
    </location>
    <ligand>
        <name>Fe cation</name>
        <dbReference type="ChEBI" id="CHEBI:24875"/>
        <note>catalytic</note>
    </ligand>
</feature>
<feature type="binding site" evidence="1">
    <location>
        <position position="255"/>
    </location>
    <ligand>
        <name>2-oxoglutarate</name>
        <dbReference type="ChEBI" id="CHEBI:16810"/>
    </ligand>
</feature>
<feature type="site" description="Involved in J base recognition, conferring specificity towards J-DNA" evidence="2">
    <location>
        <position position="525"/>
    </location>
</feature>
<keyword id="KW-0223">Dioxygenase</keyword>
<keyword id="KW-0238">DNA-binding</keyword>
<keyword id="KW-0408">Iron</keyword>
<keyword id="KW-0479">Metal-binding</keyword>
<keyword id="KW-0539">Nucleus</keyword>
<keyword id="KW-0560">Oxidoreductase</keyword>
<keyword id="KW-1185">Reference proteome</keyword>
<protein>
    <recommendedName>
        <fullName>Thymine dioxygenase JBP1</fullName>
        <ecNumber evidence="2">1.14.11.6</ecNumber>
    </recommendedName>
    <alternativeName>
        <fullName>J-binding protein 1</fullName>
    </alternativeName>
    <alternativeName>
        <fullName>Thymidine hydroxylase JBP1</fullName>
    </alternativeName>
</protein>
<evidence type="ECO:0000250" key="1">
    <source>
        <dbReference type="UniProtKB" id="Q6N021"/>
    </source>
</evidence>
<evidence type="ECO:0000250" key="2">
    <source>
        <dbReference type="UniProtKB" id="Q9U6M1"/>
    </source>
</evidence>
<evidence type="ECO:0000305" key="3"/>
<reference key="1">
    <citation type="journal article" date="2005" name="Science">
        <title>The genome of the kinetoplastid parasite, Leishmania major.</title>
        <authorList>
            <person name="Ivens A.C."/>
            <person name="Peacock C.S."/>
            <person name="Worthey E.A."/>
            <person name="Murphy L."/>
            <person name="Aggarwal G."/>
            <person name="Berriman M."/>
            <person name="Sisk E."/>
            <person name="Rajandream M.A."/>
            <person name="Adlem E."/>
            <person name="Aert R."/>
            <person name="Anupama A."/>
            <person name="Apostolou Z."/>
            <person name="Attipoe P."/>
            <person name="Bason N."/>
            <person name="Bauser C."/>
            <person name="Beck A."/>
            <person name="Beverley S.M."/>
            <person name="Bianchettin G."/>
            <person name="Borzym K."/>
            <person name="Bothe G."/>
            <person name="Bruschi C.V."/>
            <person name="Collins M."/>
            <person name="Cadag E."/>
            <person name="Ciarloni L."/>
            <person name="Clayton C."/>
            <person name="Coulson R.M.R."/>
            <person name="Cronin A."/>
            <person name="Cruz A.K."/>
            <person name="Davies R.M."/>
            <person name="De Gaudenzi J."/>
            <person name="Dobson D.E."/>
            <person name="Duesterhoeft A."/>
            <person name="Fazelina G."/>
            <person name="Fosker N."/>
            <person name="Frasch A.C."/>
            <person name="Fraser A."/>
            <person name="Fuchs M."/>
            <person name="Gabel C."/>
            <person name="Goble A."/>
            <person name="Goffeau A."/>
            <person name="Harris D."/>
            <person name="Hertz-Fowler C."/>
            <person name="Hilbert H."/>
            <person name="Horn D."/>
            <person name="Huang Y."/>
            <person name="Klages S."/>
            <person name="Knights A."/>
            <person name="Kube M."/>
            <person name="Larke N."/>
            <person name="Litvin L."/>
            <person name="Lord A."/>
            <person name="Louie T."/>
            <person name="Marra M."/>
            <person name="Masuy D."/>
            <person name="Matthews K."/>
            <person name="Michaeli S."/>
            <person name="Mottram J.C."/>
            <person name="Mueller-Auer S."/>
            <person name="Munden H."/>
            <person name="Nelson S."/>
            <person name="Norbertczak H."/>
            <person name="Oliver K."/>
            <person name="O'neil S."/>
            <person name="Pentony M."/>
            <person name="Pohl T.M."/>
            <person name="Price C."/>
            <person name="Purnelle B."/>
            <person name="Quail M.A."/>
            <person name="Rabbinowitsch E."/>
            <person name="Reinhardt R."/>
            <person name="Rieger M."/>
            <person name="Rinta J."/>
            <person name="Robben J."/>
            <person name="Robertson L."/>
            <person name="Ruiz J.C."/>
            <person name="Rutter S."/>
            <person name="Saunders D."/>
            <person name="Schaefer M."/>
            <person name="Schein J."/>
            <person name="Schwartz D.C."/>
            <person name="Seeger K."/>
            <person name="Seyler A."/>
            <person name="Sharp S."/>
            <person name="Shin H."/>
            <person name="Sivam D."/>
            <person name="Squares R."/>
            <person name="Squares S."/>
            <person name="Tosato V."/>
            <person name="Vogt C."/>
            <person name="Volckaert G."/>
            <person name="Wambutt R."/>
            <person name="Warren T."/>
            <person name="Wedler H."/>
            <person name="Woodward J."/>
            <person name="Zhou S."/>
            <person name="Zimmermann W."/>
            <person name="Smith D.F."/>
            <person name="Blackwell J.M."/>
            <person name="Stuart K.D."/>
            <person name="Barrell B.G."/>
            <person name="Myler P.J."/>
        </authorList>
    </citation>
    <scope>NUCLEOTIDE SEQUENCE [LARGE SCALE GENOMIC DNA]</scope>
    <source>
        <strain>MHOM/IL/81/Friedlin</strain>
    </source>
</reference>
<gene>
    <name type="primary">JBP1</name>
    <name type="ORF">LmjF09.1480</name>
    <name type="ORF">LmjF_09_1480</name>
</gene>
<comment type="function">
    <text evidence="2">Dioxygenase that catalyzes the first step of DNA base J (beta-d-glucosyl-HOMedU) biosynthesis by converting thymine to 5-hydroxymethyluracil (HOMedU). DNA base J is a hypermodified thymidine residue found in the genome of kinetoplastid parasites, which is localized primarily to repetitive DNA, namely the telomeres, and is implicated in the regulation of antigenic variation. Also specifically binds to base J-containing DNA (J-DNA). Involved in propagation and maintenance of DNA base J synthesis initiated by JBP2 by specifically binding already synthesized DNA base J and propagating J synthesis. Thymine dioxygenase activity and J-DNA-binding are independent functions (By similarity).</text>
</comment>
<comment type="catalytic activity">
    <reaction evidence="2">
        <text>thymine + 2-oxoglutarate + O2 = 5-hydroxymethyluracil + succinate + CO2</text>
        <dbReference type="Rhea" id="RHEA:10316"/>
        <dbReference type="ChEBI" id="CHEBI:15379"/>
        <dbReference type="ChEBI" id="CHEBI:16526"/>
        <dbReference type="ChEBI" id="CHEBI:16810"/>
        <dbReference type="ChEBI" id="CHEBI:16964"/>
        <dbReference type="ChEBI" id="CHEBI:17821"/>
        <dbReference type="ChEBI" id="CHEBI:30031"/>
        <dbReference type="EC" id="1.14.11.6"/>
    </reaction>
</comment>
<comment type="cofactor">
    <cofactor evidence="1">
        <name>Fe(2+)</name>
        <dbReference type="ChEBI" id="CHEBI:29033"/>
    </cofactor>
    <text evidence="1">Binds 1 Fe(2+) ion per subunit.</text>
</comment>
<comment type="subunit">
    <text evidence="2">Monomer. Binds to DNA as a monomer (By similarity).</text>
</comment>
<comment type="subcellular location">
    <subcellularLocation>
        <location evidence="2">Nucleus</location>
    </subcellularLocation>
</comment>
<comment type="domain">
    <text evidence="2">The DNA-binding JBP1 domain (DB-JBP1) is necessary and sufficient for binding to J-DNA.</text>
</comment>
<comment type="similarity">
    <text evidence="3">Belongs to the TET family. JBP1 subfamily.</text>
</comment>